<protein>
    <recommendedName>
        <fullName evidence="1">Chaperone protein HtpG</fullName>
    </recommendedName>
    <alternativeName>
        <fullName evidence="1">Heat shock protein HtpG</fullName>
    </alternativeName>
    <alternativeName>
        <fullName evidence="1">High temperature protein G</fullName>
    </alternativeName>
</protein>
<feature type="chain" id="PRO_0000224194" description="Chaperone protein HtpG">
    <location>
        <begin position="1"/>
        <end position="638"/>
    </location>
</feature>
<feature type="region of interest" description="A; substrate-binding" evidence="1">
    <location>
        <begin position="1"/>
        <end position="328"/>
    </location>
</feature>
<feature type="region of interest" description="B" evidence="1">
    <location>
        <begin position="329"/>
        <end position="558"/>
    </location>
</feature>
<feature type="region of interest" description="Disordered" evidence="2">
    <location>
        <begin position="484"/>
        <end position="508"/>
    </location>
</feature>
<feature type="region of interest" description="C" evidence="1">
    <location>
        <begin position="559"/>
        <end position="638"/>
    </location>
</feature>
<dbReference type="EMBL" id="CP000030">
    <property type="protein sequence ID" value="AAV86443.1"/>
    <property type="molecule type" value="Genomic_DNA"/>
</dbReference>
<dbReference type="RefSeq" id="WP_010263346.1">
    <property type="nucleotide sequence ID" value="NZ_AFMU01000022.1"/>
</dbReference>
<dbReference type="SMR" id="Q5PB86"/>
<dbReference type="GeneID" id="7398387"/>
<dbReference type="KEGG" id="ama:AM376"/>
<dbReference type="PATRIC" id="fig|320483.3.peg.316"/>
<dbReference type="HOGENOM" id="CLU_006684_3_0_5"/>
<dbReference type="GO" id="GO:0005737">
    <property type="term" value="C:cytoplasm"/>
    <property type="evidence" value="ECO:0007669"/>
    <property type="project" value="UniProtKB-SubCell"/>
</dbReference>
<dbReference type="GO" id="GO:0005524">
    <property type="term" value="F:ATP binding"/>
    <property type="evidence" value="ECO:0007669"/>
    <property type="project" value="UniProtKB-UniRule"/>
</dbReference>
<dbReference type="GO" id="GO:0016887">
    <property type="term" value="F:ATP hydrolysis activity"/>
    <property type="evidence" value="ECO:0007669"/>
    <property type="project" value="InterPro"/>
</dbReference>
<dbReference type="GO" id="GO:0140662">
    <property type="term" value="F:ATP-dependent protein folding chaperone"/>
    <property type="evidence" value="ECO:0007669"/>
    <property type="project" value="InterPro"/>
</dbReference>
<dbReference type="GO" id="GO:0051082">
    <property type="term" value="F:unfolded protein binding"/>
    <property type="evidence" value="ECO:0007669"/>
    <property type="project" value="UniProtKB-UniRule"/>
</dbReference>
<dbReference type="CDD" id="cd16927">
    <property type="entry name" value="HATPase_Hsp90-like"/>
    <property type="match status" value="1"/>
</dbReference>
<dbReference type="FunFam" id="3.30.565.10:FF:000009">
    <property type="entry name" value="Molecular chaperone HtpG"/>
    <property type="match status" value="1"/>
</dbReference>
<dbReference type="Gene3D" id="3.30.230.80">
    <property type="match status" value="1"/>
</dbReference>
<dbReference type="Gene3D" id="3.40.50.11260">
    <property type="match status" value="1"/>
</dbReference>
<dbReference type="Gene3D" id="1.20.120.790">
    <property type="entry name" value="Heat shock protein 90, C-terminal domain"/>
    <property type="match status" value="1"/>
</dbReference>
<dbReference type="Gene3D" id="3.30.565.10">
    <property type="entry name" value="Histidine kinase-like ATPase, C-terminal domain"/>
    <property type="match status" value="1"/>
</dbReference>
<dbReference type="HAMAP" id="MF_00505">
    <property type="entry name" value="HSP90"/>
    <property type="match status" value="1"/>
</dbReference>
<dbReference type="InterPro" id="IPR036890">
    <property type="entry name" value="HATPase_C_sf"/>
</dbReference>
<dbReference type="InterPro" id="IPR019805">
    <property type="entry name" value="Heat_shock_protein_90_CS"/>
</dbReference>
<dbReference type="InterPro" id="IPR037196">
    <property type="entry name" value="HSP90_C"/>
</dbReference>
<dbReference type="InterPro" id="IPR001404">
    <property type="entry name" value="Hsp90_fam"/>
</dbReference>
<dbReference type="InterPro" id="IPR020575">
    <property type="entry name" value="Hsp90_N"/>
</dbReference>
<dbReference type="InterPro" id="IPR020568">
    <property type="entry name" value="Ribosomal_Su5_D2-typ_SF"/>
</dbReference>
<dbReference type="NCBIfam" id="NF003555">
    <property type="entry name" value="PRK05218.1"/>
    <property type="match status" value="1"/>
</dbReference>
<dbReference type="PANTHER" id="PTHR11528">
    <property type="entry name" value="HEAT SHOCK PROTEIN 90 FAMILY MEMBER"/>
    <property type="match status" value="1"/>
</dbReference>
<dbReference type="Pfam" id="PF13589">
    <property type="entry name" value="HATPase_c_3"/>
    <property type="match status" value="1"/>
</dbReference>
<dbReference type="Pfam" id="PF00183">
    <property type="entry name" value="HSP90"/>
    <property type="match status" value="1"/>
</dbReference>
<dbReference type="PIRSF" id="PIRSF002583">
    <property type="entry name" value="Hsp90"/>
    <property type="match status" value="1"/>
</dbReference>
<dbReference type="PRINTS" id="PR00775">
    <property type="entry name" value="HEATSHOCK90"/>
</dbReference>
<dbReference type="SMART" id="SM00387">
    <property type="entry name" value="HATPase_c"/>
    <property type="match status" value="1"/>
</dbReference>
<dbReference type="SUPFAM" id="SSF55874">
    <property type="entry name" value="ATPase domain of HSP90 chaperone/DNA topoisomerase II/histidine kinase"/>
    <property type="match status" value="1"/>
</dbReference>
<dbReference type="SUPFAM" id="SSF110942">
    <property type="entry name" value="HSP90 C-terminal domain"/>
    <property type="match status" value="1"/>
</dbReference>
<dbReference type="SUPFAM" id="SSF54211">
    <property type="entry name" value="Ribosomal protein S5 domain 2-like"/>
    <property type="match status" value="1"/>
</dbReference>
<dbReference type="PROSITE" id="PS00298">
    <property type="entry name" value="HSP90"/>
    <property type="match status" value="1"/>
</dbReference>
<organism>
    <name type="scientific">Anaplasma marginale (strain St. Maries)</name>
    <dbReference type="NCBI Taxonomy" id="234826"/>
    <lineage>
        <taxon>Bacteria</taxon>
        <taxon>Pseudomonadati</taxon>
        <taxon>Pseudomonadota</taxon>
        <taxon>Alphaproteobacteria</taxon>
        <taxon>Rickettsiales</taxon>
        <taxon>Anaplasmataceae</taxon>
        <taxon>Anaplasma</taxon>
    </lineage>
</organism>
<proteinExistence type="inferred from homology"/>
<evidence type="ECO:0000255" key="1">
    <source>
        <dbReference type="HAMAP-Rule" id="MF_00505"/>
    </source>
</evidence>
<evidence type="ECO:0000256" key="2">
    <source>
        <dbReference type="SAM" id="MobiDB-lite"/>
    </source>
</evidence>
<accession>Q5PB86</accession>
<keyword id="KW-0067">ATP-binding</keyword>
<keyword id="KW-0143">Chaperone</keyword>
<keyword id="KW-0963">Cytoplasm</keyword>
<keyword id="KW-0547">Nucleotide-binding</keyword>
<keyword id="KW-0346">Stress response</keyword>
<name>HTPG_ANAMM</name>
<gene>
    <name evidence="1" type="primary">htpG</name>
    <name type="ordered locus">AM376</name>
</gene>
<sequence length="638" mass="72356">MGDVEELKFSAEVGKVLSLVVHSLYTNKDIFLREVISNASDACDKLRYLFCSDQSLMEAGEELRIVISVDRDRRELTVRDNGIGMSRKELIDNLGTIASSGTQRFLEEFKGGKAQGCDLIGKFGVGFYSVFMVATDVVVESCKAGEKVGHRWQSSGDGVFSVSTIEGDVSRGTKVILTLREDEFDFLDKFRIEHIVTTYSDHVGYPIYLIASDGTEEKLNSGVAIWTKPKDEISESEHMEFFRSISHIGSNPWMVIHNKNEGTIEYINLLYVPSVKPFDLFHPDRRCSVKLYVNRVFITEDNVQVIPQYMRFLRGVIDSSDLPLNISRETLQNNMVIEKIKASVTRRVLTSLREKADSDPVSYKTFWENFGPVLKEGLCEAMDTESRESILSVCRFYSSNSKEGELISLGDYISRMKPGQEHIFYLSGNDLESAMRSPQIEGMVSNGIEVVLLVDPVDDFWTSVVLEYKGVPFKSVTRVDESDLEKFTEGDDQQSTKKKKEKKDTDDAQQKENVEAFIDYMKKVLGDSVSDIKVSRKLTTSLVCLAVPEHALDIRMERFLREQKQLSYKGSRILELNIKHPVLSGLLREYKDNGESELLENMVHVLFDQACIIEGEEVNSAVDFANRMNQVLARLFKK</sequence>
<reference key="1">
    <citation type="journal article" date="2005" name="Proc. Natl. Acad. Sci. U.S.A.">
        <title>Complete genome sequencing of Anaplasma marginale reveals that the surface is skewed to two superfamilies of outer membrane proteins.</title>
        <authorList>
            <person name="Brayton K.A."/>
            <person name="Kappmeyer L.S."/>
            <person name="Herndon D.R."/>
            <person name="Dark M.J."/>
            <person name="Tibbals D.L."/>
            <person name="Palmer G.H."/>
            <person name="McGuire T.C."/>
            <person name="Knowles D.P. Jr."/>
        </authorList>
    </citation>
    <scope>NUCLEOTIDE SEQUENCE [LARGE SCALE GENOMIC DNA]</scope>
    <source>
        <strain>St. Maries</strain>
    </source>
</reference>
<comment type="function">
    <text evidence="1">Molecular chaperone. Has ATPase activity.</text>
</comment>
<comment type="subunit">
    <text evidence="1">Homodimer.</text>
</comment>
<comment type="subcellular location">
    <subcellularLocation>
        <location evidence="1">Cytoplasm</location>
    </subcellularLocation>
</comment>
<comment type="similarity">
    <text evidence="1">Belongs to the heat shock protein 90 family.</text>
</comment>